<reference key="1">
    <citation type="journal article" date="2005" name="BMC Genomics">
        <title>Bacterial genome adaptation to niches: divergence of the potential virulence genes in three Burkholderia species of different survival strategies.</title>
        <authorList>
            <person name="Kim H.S."/>
            <person name="Schell M.A."/>
            <person name="Yu Y."/>
            <person name="Ulrich R.L."/>
            <person name="Sarria S.H."/>
            <person name="Nierman W.C."/>
            <person name="DeShazer D."/>
        </authorList>
    </citation>
    <scope>NUCLEOTIDE SEQUENCE [LARGE SCALE GENOMIC DNA]</scope>
    <source>
        <strain>ATCC 700388 / DSM 13276 / CCUG 48851 / CIP 106301 / E264</strain>
    </source>
</reference>
<organism>
    <name type="scientific">Burkholderia thailandensis (strain ATCC 700388 / DSM 13276 / CCUG 48851 / CIP 106301 / E264)</name>
    <dbReference type="NCBI Taxonomy" id="271848"/>
    <lineage>
        <taxon>Bacteria</taxon>
        <taxon>Pseudomonadati</taxon>
        <taxon>Pseudomonadota</taxon>
        <taxon>Betaproteobacteria</taxon>
        <taxon>Burkholderiales</taxon>
        <taxon>Burkholderiaceae</taxon>
        <taxon>Burkholderia</taxon>
        <taxon>pseudomallei group</taxon>
    </lineage>
</organism>
<sequence>MERTTIMTLDFSKPGEAGYQSGFANEFATEALPGALPHARNSPQRAPYGLYAEQLSGTAFTAPRGHNRRSWLYRIRPAAVHRPFELVSGERRIVADFGDSGDVPPTPPNQLRWDPLPMPAQPTDFVDGWVTMAGNGSAAAMSGCAIHLYAANRSMRERFFYSADGELLIVPQEGRLFIMTELGRLDVEPFEIAVIPRGVRFAVALPDGRARGYVCENFGALLRLPDLGPIGSNGLANPRDFLTPNASYEDREGAFELVAKLNGRLWRADIDHSPFDVVAWHGNYAPYKYDLRHFNTIGSISYDHPDPSIFLVLQSQSDTPGVDAIDFVIFPPRWLAAEDTFRPPWFHRNVASEFMGLVHGVYDAKAEGFVPGGASLHNCMSGHGPDADTFEKASAIDTSRPNKVGDTMAFMFETRTLIRPTRFALDTAQLQANYFECWQGLKKHFNPEQR</sequence>
<feature type="chain" id="PRO_1000019528" description="Homogentisate 1,2-dioxygenase">
    <location>
        <begin position="1"/>
        <end position="450"/>
    </location>
</feature>
<feature type="active site" description="Proton acceptor" evidence="1">
    <location>
        <position position="304"/>
    </location>
</feature>
<feature type="binding site" evidence="1">
    <location>
        <position position="347"/>
    </location>
    <ligand>
        <name>Fe cation</name>
        <dbReference type="ChEBI" id="CHEBI:24875"/>
    </ligand>
</feature>
<feature type="binding site" evidence="1">
    <location>
        <position position="353"/>
    </location>
    <ligand>
        <name>Fe cation</name>
        <dbReference type="ChEBI" id="CHEBI:24875"/>
    </ligand>
</feature>
<feature type="binding site" evidence="1">
    <location>
        <position position="362"/>
    </location>
    <ligand>
        <name>homogentisate</name>
        <dbReference type="ChEBI" id="CHEBI:16169"/>
    </ligand>
</feature>
<feature type="binding site" evidence="1">
    <location>
        <position position="383"/>
    </location>
    <ligand>
        <name>Fe cation</name>
        <dbReference type="ChEBI" id="CHEBI:24875"/>
    </ligand>
</feature>
<feature type="binding site" evidence="1">
    <location>
        <position position="383"/>
    </location>
    <ligand>
        <name>homogentisate</name>
        <dbReference type="ChEBI" id="CHEBI:16169"/>
    </ligand>
</feature>
<name>HGD_BURTA</name>
<gene>
    <name evidence="1" type="primary">hmgA</name>
    <name type="ordered locus">BTH_I1397</name>
</gene>
<keyword id="KW-0223">Dioxygenase</keyword>
<keyword id="KW-0408">Iron</keyword>
<keyword id="KW-0479">Metal-binding</keyword>
<keyword id="KW-0560">Oxidoreductase</keyword>
<keyword id="KW-0585">Phenylalanine catabolism</keyword>
<keyword id="KW-0828">Tyrosine catabolism</keyword>
<proteinExistence type="inferred from homology"/>
<protein>
    <recommendedName>
        <fullName evidence="1">Homogentisate 1,2-dioxygenase</fullName>
        <shortName evidence="1">HGDO</shortName>
        <ecNumber evidence="1">1.13.11.5</ecNumber>
    </recommendedName>
    <alternativeName>
        <fullName evidence="1">Homogentisate oxygenase</fullName>
    </alternativeName>
    <alternativeName>
        <fullName evidence="1">Homogentisic acid oxidase</fullName>
    </alternativeName>
    <alternativeName>
        <fullName evidence="1">Homogentisicase</fullName>
    </alternativeName>
</protein>
<evidence type="ECO:0000255" key="1">
    <source>
        <dbReference type="HAMAP-Rule" id="MF_00334"/>
    </source>
</evidence>
<comment type="function">
    <text evidence="1">Involved in the catabolism of homogentisate (2,5-dihydroxyphenylacetate or 2,5-OH-PhAc), a central intermediate in the degradation of phenylalanine and tyrosine. Catalyzes the oxidative ring cleavage of the aromatic ring of homogentisate to yield maleylacetoacetate.</text>
</comment>
<comment type="catalytic activity">
    <reaction evidence="1">
        <text>homogentisate + O2 = 4-maleylacetoacetate + H(+)</text>
        <dbReference type="Rhea" id="RHEA:15449"/>
        <dbReference type="ChEBI" id="CHEBI:15378"/>
        <dbReference type="ChEBI" id="CHEBI:15379"/>
        <dbReference type="ChEBI" id="CHEBI:16169"/>
        <dbReference type="ChEBI" id="CHEBI:17105"/>
        <dbReference type="EC" id="1.13.11.5"/>
    </reaction>
</comment>
<comment type="cofactor">
    <cofactor evidence="1">
        <name>Fe cation</name>
        <dbReference type="ChEBI" id="CHEBI:24875"/>
    </cofactor>
</comment>
<comment type="pathway">
    <text evidence="1">Amino-acid degradation; L-phenylalanine degradation; acetoacetate and fumarate from L-phenylalanine: step 4/6.</text>
</comment>
<comment type="subunit">
    <text evidence="1">Hexamer; dimer of trimers.</text>
</comment>
<comment type="similarity">
    <text evidence="1">Belongs to the homogentisate dioxygenase family.</text>
</comment>
<accession>Q2SYQ6</accession>
<dbReference type="EC" id="1.13.11.5" evidence="1"/>
<dbReference type="EMBL" id="CP000086">
    <property type="protein sequence ID" value="ABC36904.1"/>
    <property type="molecule type" value="Genomic_DNA"/>
</dbReference>
<dbReference type="SMR" id="Q2SYQ6"/>
<dbReference type="KEGG" id="bte:BTH_I1397"/>
<dbReference type="HOGENOM" id="CLU_027174_0_0_4"/>
<dbReference type="UniPathway" id="UPA00139">
    <property type="reaction ID" value="UER00339"/>
</dbReference>
<dbReference type="Proteomes" id="UP000001930">
    <property type="component" value="Chromosome I"/>
</dbReference>
<dbReference type="GO" id="GO:0005737">
    <property type="term" value="C:cytoplasm"/>
    <property type="evidence" value="ECO:0007669"/>
    <property type="project" value="TreeGrafter"/>
</dbReference>
<dbReference type="GO" id="GO:0004411">
    <property type="term" value="F:homogentisate 1,2-dioxygenase activity"/>
    <property type="evidence" value="ECO:0007669"/>
    <property type="project" value="UniProtKB-UniRule"/>
</dbReference>
<dbReference type="GO" id="GO:0005506">
    <property type="term" value="F:iron ion binding"/>
    <property type="evidence" value="ECO:0007669"/>
    <property type="project" value="UniProtKB-UniRule"/>
</dbReference>
<dbReference type="GO" id="GO:0006559">
    <property type="term" value="P:L-phenylalanine catabolic process"/>
    <property type="evidence" value="ECO:0007669"/>
    <property type="project" value="UniProtKB-UniRule"/>
</dbReference>
<dbReference type="GO" id="GO:0006572">
    <property type="term" value="P:tyrosine catabolic process"/>
    <property type="evidence" value="ECO:0007669"/>
    <property type="project" value="UniProtKB-UniRule"/>
</dbReference>
<dbReference type="CDD" id="cd07000">
    <property type="entry name" value="cupin_HGO_N"/>
    <property type="match status" value="1"/>
</dbReference>
<dbReference type="FunFam" id="2.60.120.10:FF:000034">
    <property type="entry name" value="Homogentisate 1,2-dioxygenase"/>
    <property type="match status" value="1"/>
</dbReference>
<dbReference type="Gene3D" id="2.60.120.10">
    <property type="entry name" value="Jelly Rolls"/>
    <property type="match status" value="1"/>
</dbReference>
<dbReference type="HAMAP" id="MF_00334">
    <property type="entry name" value="Homogentis_dioxygen"/>
    <property type="match status" value="1"/>
</dbReference>
<dbReference type="InterPro" id="IPR046451">
    <property type="entry name" value="HgmA_C"/>
</dbReference>
<dbReference type="InterPro" id="IPR046452">
    <property type="entry name" value="HgmA_N"/>
</dbReference>
<dbReference type="InterPro" id="IPR005708">
    <property type="entry name" value="Homogentis_dOase"/>
</dbReference>
<dbReference type="InterPro" id="IPR022950">
    <property type="entry name" value="Homogentis_dOase_bac"/>
</dbReference>
<dbReference type="InterPro" id="IPR014710">
    <property type="entry name" value="RmlC-like_jellyroll"/>
</dbReference>
<dbReference type="InterPro" id="IPR011051">
    <property type="entry name" value="RmlC_Cupin_sf"/>
</dbReference>
<dbReference type="NCBIfam" id="TIGR01015">
    <property type="entry name" value="hmgA"/>
    <property type="match status" value="1"/>
</dbReference>
<dbReference type="PANTHER" id="PTHR11056">
    <property type="entry name" value="HOMOGENTISATE 1,2-DIOXYGENASE"/>
    <property type="match status" value="1"/>
</dbReference>
<dbReference type="PANTHER" id="PTHR11056:SF0">
    <property type="entry name" value="HOMOGENTISATE 1,2-DIOXYGENASE"/>
    <property type="match status" value="1"/>
</dbReference>
<dbReference type="Pfam" id="PF04209">
    <property type="entry name" value="HgmA_C"/>
    <property type="match status" value="1"/>
</dbReference>
<dbReference type="Pfam" id="PF20510">
    <property type="entry name" value="HgmA_N"/>
    <property type="match status" value="1"/>
</dbReference>
<dbReference type="SUPFAM" id="SSF51182">
    <property type="entry name" value="RmlC-like cupins"/>
    <property type="match status" value="1"/>
</dbReference>